<gene>
    <name evidence="1" type="primary">kynB</name>
    <name type="ordered locus">BURPS1710b_1055</name>
</gene>
<sequence length="213" mass="22755">MDTIWDISPPIAPATPVWPGDTPVGIERVWRIEAGSPVNVARVTLSPHTGAHADAPLHYDADGTPIGAVPLDAYLGRCRVIHCIGARSAVTPEHVRAALAGAPPRVLLRTYGQAPQHAWNSAFCAVAPETIDLLAAHGVRLVGIDTPSLDPQESKTMDAHRRIRAHRMAILEGLVLDEIAAGDYELIALPLKFTTLDASPVRAVLRALPDAPR</sequence>
<protein>
    <recommendedName>
        <fullName evidence="1">Kynurenine formamidase</fullName>
        <shortName evidence="1">KFA</shortName>
        <shortName evidence="1">KFase</shortName>
        <ecNumber evidence="1">3.5.1.9</ecNumber>
    </recommendedName>
    <alternativeName>
        <fullName evidence="1">Arylformamidase</fullName>
    </alternativeName>
    <alternativeName>
        <fullName evidence="1">N-formylkynurenine formamidase</fullName>
        <shortName evidence="1">FKF</shortName>
    </alternativeName>
</protein>
<name>KYNB_BURP1</name>
<feature type="chain" id="PRO_0000362111" description="Kynurenine formamidase">
    <location>
        <begin position="1"/>
        <end position="213"/>
    </location>
</feature>
<feature type="active site" description="Proton donor/acceptor" evidence="1">
    <location>
        <position position="58"/>
    </location>
</feature>
<feature type="binding site" evidence="1">
    <location>
        <position position="18"/>
    </location>
    <ligand>
        <name>substrate</name>
    </ligand>
</feature>
<feature type="binding site" evidence="1">
    <location>
        <position position="48"/>
    </location>
    <ligand>
        <name>Zn(2+)</name>
        <dbReference type="ChEBI" id="CHEBI:29105"/>
        <label>1</label>
    </ligand>
</feature>
<feature type="binding site" evidence="1">
    <location>
        <position position="52"/>
    </location>
    <ligand>
        <name>Zn(2+)</name>
        <dbReference type="ChEBI" id="CHEBI:29105"/>
        <label>1</label>
    </ligand>
</feature>
<feature type="binding site" evidence="1">
    <location>
        <position position="54"/>
    </location>
    <ligand>
        <name>Zn(2+)</name>
        <dbReference type="ChEBI" id="CHEBI:29105"/>
        <label>1</label>
    </ligand>
</feature>
<feature type="binding site" evidence="1">
    <location>
        <position position="54"/>
    </location>
    <ligand>
        <name>Zn(2+)</name>
        <dbReference type="ChEBI" id="CHEBI:29105"/>
        <label>2</label>
    </ligand>
</feature>
<feature type="binding site" evidence="1">
    <location>
        <position position="160"/>
    </location>
    <ligand>
        <name>Zn(2+)</name>
        <dbReference type="ChEBI" id="CHEBI:29105"/>
        <label>2</label>
    </ligand>
</feature>
<feature type="binding site" evidence="1">
    <location>
        <position position="172"/>
    </location>
    <ligand>
        <name>Zn(2+)</name>
        <dbReference type="ChEBI" id="CHEBI:29105"/>
        <label>1</label>
    </ligand>
</feature>
<feature type="binding site" evidence="1">
    <location>
        <position position="172"/>
    </location>
    <ligand>
        <name>Zn(2+)</name>
        <dbReference type="ChEBI" id="CHEBI:29105"/>
        <label>2</label>
    </ligand>
</feature>
<comment type="function">
    <text evidence="1">Catalyzes the hydrolysis of N-formyl-L-kynurenine to L-kynurenine, the second step in the kynurenine pathway of tryptophan degradation.</text>
</comment>
<comment type="catalytic activity">
    <reaction evidence="1">
        <text>N-formyl-L-kynurenine + H2O = L-kynurenine + formate + H(+)</text>
        <dbReference type="Rhea" id="RHEA:13009"/>
        <dbReference type="ChEBI" id="CHEBI:15377"/>
        <dbReference type="ChEBI" id="CHEBI:15378"/>
        <dbReference type="ChEBI" id="CHEBI:15740"/>
        <dbReference type="ChEBI" id="CHEBI:57959"/>
        <dbReference type="ChEBI" id="CHEBI:58629"/>
        <dbReference type="EC" id="3.5.1.9"/>
    </reaction>
</comment>
<comment type="cofactor">
    <cofactor evidence="1">
        <name>Zn(2+)</name>
        <dbReference type="ChEBI" id="CHEBI:29105"/>
    </cofactor>
    <text evidence="1">Binds 2 zinc ions per subunit.</text>
</comment>
<comment type="pathway">
    <text evidence="1">Amino-acid degradation; L-tryptophan degradation via kynurenine pathway; L-kynurenine from L-tryptophan: step 2/2.</text>
</comment>
<comment type="subunit">
    <text evidence="1">Homodimer.</text>
</comment>
<comment type="similarity">
    <text evidence="1">Belongs to the Cyclase 1 superfamily. KynB family.</text>
</comment>
<comment type="sequence caution" evidence="2">
    <conflict type="erroneous initiation">
        <sequence resource="EMBL-CDS" id="ABA49041"/>
    </conflict>
</comment>
<keyword id="KW-0378">Hydrolase</keyword>
<keyword id="KW-0479">Metal-binding</keyword>
<keyword id="KW-0823">Tryptophan catabolism</keyword>
<keyword id="KW-0862">Zinc</keyword>
<organism>
    <name type="scientific">Burkholderia pseudomallei (strain 1710b)</name>
    <dbReference type="NCBI Taxonomy" id="320372"/>
    <lineage>
        <taxon>Bacteria</taxon>
        <taxon>Pseudomonadati</taxon>
        <taxon>Pseudomonadota</taxon>
        <taxon>Betaproteobacteria</taxon>
        <taxon>Burkholderiales</taxon>
        <taxon>Burkholderiaceae</taxon>
        <taxon>Burkholderia</taxon>
        <taxon>pseudomallei group</taxon>
    </lineage>
</organism>
<reference key="1">
    <citation type="journal article" date="2010" name="Genome Biol. Evol.">
        <title>Continuing evolution of Burkholderia mallei through genome reduction and large-scale rearrangements.</title>
        <authorList>
            <person name="Losada L."/>
            <person name="Ronning C.M."/>
            <person name="DeShazer D."/>
            <person name="Woods D."/>
            <person name="Fedorova N."/>
            <person name="Kim H.S."/>
            <person name="Shabalina S.A."/>
            <person name="Pearson T.R."/>
            <person name="Brinkac L."/>
            <person name="Tan P."/>
            <person name="Nandi T."/>
            <person name="Crabtree J."/>
            <person name="Badger J."/>
            <person name="Beckstrom-Sternberg S."/>
            <person name="Saqib M."/>
            <person name="Schutzer S.E."/>
            <person name="Keim P."/>
            <person name="Nierman W.C."/>
        </authorList>
    </citation>
    <scope>NUCLEOTIDE SEQUENCE [LARGE SCALE GENOMIC DNA]</scope>
    <source>
        <strain>1710b</strain>
    </source>
</reference>
<evidence type="ECO:0000255" key="1">
    <source>
        <dbReference type="HAMAP-Rule" id="MF_01969"/>
    </source>
</evidence>
<evidence type="ECO:0000305" key="2"/>
<accession>Q3JVD6</accession>
<proteinExistence type="inferred from homology"/>
<dbReference type="EC" id="3.5.1.9" evidence="1"/>
<dbReference type="EMBL" id="CP000124">
    <property type="protein sequence ID" value="ABA49041.1"/>
    <property type="status" value="ALT_INIT"/>
    <property type="molecule type" value="Genomic_DNA"/>
</dbReference>
<dbReference type="RefSeq" id="WP_038724085.1">
    <property type="nucleotide sequence ID" value="NC_007434.1"/>
</dbReference>
<dbReference type="SMR" id="Q3JVD6"/>
<dbReference type="EnsemblBacteria" id="ABA49041">
    <property type="protein sequence ID" value="ABA49041"/>
    <property type="gene ID" value="BURPS1710b_1055"/>
</dbReference>
<dbReference type="KEGG" id="bpm:BURPS1710b_1055"/>
<dbReference type="HOGENOM" id="CLU_030671_3_1_4"/>
<dbReference type="UniPathway" id="UPA00333">
    <property type="reaction ID" value="UER00454"/>
</dbReference>
<dbReference type="Proteomes" id="UP000002700">
    <property type="component" value="Chromosome I"/>
</dbReference>
<dbReference type="GO" id="GO:0004061">
    <property type="term" value="F:arylformamidase activity"/>
    <property type="evidence" value="ECO:0000250"/>
    <property type="project" value="UniProtKB"/>
</dbReference>
<dbReference type="GO" id="GO:0004328">
    <property type="term" value="F:formamidase activity"/>
    <property type="evidence" value="ECO:0007669"/>
    <property type="project" value="InterPro"/>
</dbReference>
<dbReference type="GO" id="GO:0008270">
    <property type="term" value="F:zinc ion binding"/>
    <property type="evidence" value="ECO:0007669"/>
    <property type="project" value="UniProtKB-UniRule"/>
</dbReference>
<dbReference type="GO" id="GO:0043420">
    <property type="term" value="P:anthranilate metabolic process"/>
    <property type="evidence" value="ECO:0000250"/>
    <property type="project" value="UniProtKB"/>
</dbReference>
<dbReference type="GO" id="GO:0019441">
    <property type="term" value="P:L-tryptophan catabolic process to kynurenine"/>
    <property type="evidence" value="ECO:0000250"/>
    <property type="project" value="UniProtKB"/>
</dbReference>
<dbReference type="FunFam" id="3.50.30.50:FF:000001">
    <property type="entry name" value="Kynurenine formamidase"/>
    <property type="match status" value="1"/>
</dbReference>
<dbReference type="Gene3D" id="3.50.30.50">
    <property type="entry name" value="Putative cyclase"/>
    <property type="match status" value="1"/>
</dbReference>
<dbReference type="HAMAP" id="MF_01969">
    <property type="entry name" value="KynB"/>
    <property type="match status" value="1"/>
</dbReference>
<dbReference type="InterPro" id="IPR007325">
    <property type="entry name" value="KFase/CYL"/>
</dbReference>
<dbReference type="InterPro" id="IPR037175">
    <property type="entry name" value="KFase_sf"/>
</dbReference>
<dbReference type="InterPro" id="IPR017484">
    <property type="entry name" value="Kynurenine_formamidase_bac"/>
</dbReference>
<dbReference type="NCBIfam" id="TIGR03035">
    <property type="entry name" value="trp_arylform"/>
    <property type="match status" value="1"/>
</dbReference>
<dbReference type="PANTHER" id="PTHR31118">
    <property type="entry name" value="CYCLASE-LIKE PROTEIN 2"/>
    <property type="match status" value="1"/>
</dbReference>
<dbReference type="PANTHER" id="PTHR31118:SF32">
    <property type="entry name" value="KYNURENINE FORMAMIDASE"/>
    <property type="match status" value="1"/>
</dbReference>
<dbReference type="Pfam" id="PF04199">
    <property type="entry name" value="Cyclase"/>
    <property type="match status" value="1"/>
</dbReference>
<dbReference type="SUPFAM" id="SSF102198">
    <property type="entry name" value="Putative cyclase"/>
    <property type="match status" value="1"/>
</dbReference>